<comment type="function">
    <text evidence="1">Part of the high-affinity ATP-driven potassium transport (or Kdp) system, which catalyzes the hydrolysis of ATP coupled with the electrogenic transport of potassium into the cytoplasm. This subunit is responsible for energy coupling to the transport system and for the release of the potassium ions to the cytoplasm.</text>
</comment>
<comment type="catalytic activity">
    <reaction evidence="1">
        <text>K(+)(out) + ATP + H2O = K(+)(in) + ADP + phosphate + H(+)</text>
        <dbReference type="Rhea" id="RHEA:16777"/>
        <dbReference type="ChEBI" id="CHEBI:15377"/>
        <dbReference type="ChEBI" id="CHEBI:15378"/>
        <dbReference type="ChEBI" id="CHEBI:29103"/>
        <dbReference type="ChEBI" id="CHEBI:30616"/>
        <dbReference type="ChEBI" id="CHEBI:43474"/>
        <dbReference type="ChEBI" id="CHEBI:456216"/>
        <dbReference type="EC" id="7.2.2.6"/>
    </reaction>
    <physiologicalReaction direction="left-to-right" evidence="1">
        <dbReference type="Rhea" id="RHEA:16778"/>
    </physiologicalReaction>
</comment>
<comment type="subunit">
    <text evidence="1">The system is composed of three essential subunits: KdpA, KdpB and KdpC.</text>
</comment>
<comment type="subcellular location">
    <subcellularLocation>
        <location evidence="1">Cell inner membrane</location>
        <topology evidence="1">Multi-pass membrane protein</topology>
    </subcellularLocation>
</comment>
<comment type="similarity">
    <text evidence="1">Belongs to the cation transport ATPase (P-type) (TC 3.A.3) family. Type IA subfamily.</text>
</comment>
<dbReference type="EC" id="7.2.2.6" evidence="1"/>
<dbReference type="EMBL" id="AL646052">
    <property type="protein sequence ID" value="CAD16880.1"/>
    <property type="molecule type" value="Genomic_DNA"/>
</dbReference>
<dbReference type="RefSeq" id="WP_011003264.1">
    <property type="nucleotide sequence ID" value="NC_003295.1"/>
</dbReference>
<dbReference type="SMR" id="Q8XU11"/>
<dbReference type="STRING" id="267608.RSc3383"/>
<dbReference type="EnsemblBacteria" id="CAD16880">
    <property type="protein sequence ID" value="CAD16880"/>
    <property type="gene ID" value="RSc3383"/>
</dbReference>
<dbReference type="KEGG" id="rso:RSc3383"/>
<dbReference type="PATRIC" id="fig|267608.8.peg.3435"/>
<dbReference type="eggNOG" id="COG2216">
    <property type="taxonomic scope" value="Bacteria"/>
</dbReference>
<dbReference type="HOGENOM" id="CLU_025728_2_0_4"/>
<dbReference type="Proteomes" id="UP000001436">
    <property type="component" value="Chromosome"/>
</dbReference>
<dbReference type="GO" id="GO:0005886">
    <property type="term" value="C:plasma membrane"/>
    <property type="evidence" value="ECO:0007669"/>
    <property type="project" value="UniProtKB-SubCell"/>
</dbReference>
<dbReference type="GO" id="GO:0005524">
    <property type="term" value="F:ATP binding"/>
    <property type="evidence" value="ECO:0007669"/>
    <property type="project" value="UniProtKB-UniRule"/>
</dbReference>
<dbReference type="GO" id="GO:0016887">
    <property type="term" value="F:ATP hydrolysis activity"/>
    <property type="evidence" value="ECO:0007669"/>
    <property type="project" value="InterPro"/>
</dbReference>
<dbReference type="GO" id="GO:0000287">
    <property type="term" value="F:magnesium ion binding"/>
    <property type="evidence" value="ECO:0007669"/>
    <property type="project" value="UniProtKB-UniRule"/>
</dbReference>
<dbReference type="GO" id="GO:0008556">
    <property type="term" value="F:P-type potassium transmembrane transporter activity"/>
    <property type="evidence" value="ECO:0007669"/>
    <property type="project" value="UniProtKB-UniRule"/>
</dbReference>
<dbReference type="CDD" id="cd02078">
    <property type="entry name" value="P-type_ATPase_K"/>
    <property type="match status" value="1"/>
</dbReference>
<dbReference type="FunFam" id="2.70.150.10:FF:000010">
    <property type="entry name" value="Potassium-transporting ATPase ATP-binding subunit"/>
    <property type="match status" value="1"/>
</dbReference>
<dbReference type="FunFam" id="3.40.1110.10:FF:000007">
    <property type="entry name" value="Potassium-transporting ATPase ATP-binding subunit"/>
    <property type="match status" value="1"/>
</dbReference>
<dbReference type="Gene3D" id="3.40.1110.10">
    <property type="entry name" value="Calcium-transporting ATPase, cytoplasmic domain N"/>
    <property type="match status" value="1"/>
</dbReference>
<dbReference type="Gene3D" id="2.70.150.10">
    <property type="entry name" value="Calcium-transporting ATPase, cytoplasmic transduction domain A"/>
    <property type="match status" value="1"/>
</dbReference>
<dbReference type="Gene3D" id="3.40.50.1000">
    <property type="entry name" value="HAD superfamily/HAD-like"/>
    <property type="match status" value="1"/>
</dbReference>
<dbReference type="HAMAP" id="MF_00285">
    <property type="entry name" value="KdpB"/>
    <property type="match status" value="1"/>
</dbReference>
<dbReference type="InterPro" id="IPR023299">
    <property type="entry name" value="ATPase_P-typ_cyto_dom_N"/>
</dbReference>
<dbReference type="InterPro" id="IPR018303">
    <property type="entry name" value="ATPase_P-typ_P_site"/>
</dbReference>
<dbReference type="InterPro" id="IPR023298">
    <property type="entry name" value="ATPase_P-typ_TM_dom_sf"/>
</dbReference>
<dbReference type="InterPro" id="IPR008250">
    <property type="entry name" value="ATPase_P-typ_transduc_dom_A_sf"/>
</dbReference>
<dbReference type="InterPro" id="IPR036412">
    <property type="entry name" value="HAD-like_sf"/>
</dbReference>
<dbReference type="InterPro" id="IPR023214">
    <property type="entry name" value="HAD_sf"/>
</dbReference>
<dbReference type="InterPro" id="IPR006391">
    <property type="entry name" value="P-type_ATPase_bsu_IA"/>
</dbReference>
<dbReference type="InterPro" id="IPR001757">
    <property type="entry name" value="P_typ_ATPase"/>
</dbReference>
<dbReference type="InterPro" id="IPR044492">
    <property type="entry name" value="P_typ_ATPase_HD_dom"/>
</dbReference>
<dbReference type="NCBIfam" id="TIGR01494">
    <property type="entry name" value="ATPase_P-type"/>
    <property type="match status" value="2"/>
</dbReference>
<dbReference type="NCBIfam" id="TIGR01497">
    <property type="entry name" value="kdpB"/>
    <property type="match status" value="1"/>
</dbReference>
<dbReference type="PANTHER" id="PTHR43743">
    <property type="entry name" value="POTASSIUM-TRANSPORTING ATPASE ATP-BINDING SUBUNIT"/>
    <property type="match status" value="1"/>
</dbReference>
<dbReference type="PANTHER" id="PTHR43743:SF1">
    <property type="entry name" value="POTASSIUM-TRANSPORTING ATPASE ATP-BINDING SUBUNIT"/>
    <property type="match status" value="1"/>
</dbReference>
<dbReference type="Pfam" id="PF00122">
    <property type="entry name" value="E1-E2_ATPase"/>
    <property type="match status" value="1"/>
</dbReference>
<dbReference type="Pfam" id="PF00702">
    <property type="entry name" value="Hydrolase"/>
    <property type="match status" value="1"/>
</dbReference>
<dbReference type="PRINTS" id="PR00119">
    <property type="entry name" value="CATATPASE"/>
</dbReference>
<dbReference type="SFLD" id="SFLDS00003">
    <property type="entry name" value="Haloacid_Dehalogenase"/>
    <property type="match status" value="1"/>
</dbReference>
<dbReference type="SFLD" id="SFLDF00027">
    <property type="entry name" value="p-type_atpase"/>
    <property type="match status" value="1"/>
</dbReference>
<dbReference type="SUPFAM" id="SSF81653">
    <property type="entry name" value="Calcium ATPase, transduction domain A"/>
    <property type="match status" value="1"/>
</dbReference>
<dbReference type="SUPFAM" id="SSF81665">
    <property type="entry name" value="Calcium ATPase, transmembrane domain M"/>
    <property type="match status" value="1"/>
</dbReference>
<dbReference type="SUPFAM" id="SSF56784">
    <property type="entry name" value="HAD-like"/>
    <property type="match status" value="1"/>
</dbReference>
<dbReference type="SUPFAM" id="SSF81660">
    <property type="entry name" value="Metal cation-transporting ATPase, ATP-binding domain N"/>
    <property type="match status" value="1"/>
</dbReference>
<dbReference type="PROSITE" id="PS00154">
    <property type="entry name" value="ATPASE_E1_E2"/>
    <property type="match status" value="1"/>
</dbReference>
<reference key="1">
    <citation type="journal article" date="2002" name="Nature">
        <title>Genome sequence of the plant pathogen Ralstonia solanacearum.</title>
        <authorList>
            <person name="Salanoubat M."/>
            <person name="Genin S."/>
            <person name="Artiguenave F."/>
            <person name="Gouzy J."/>
            <person name="Mangenot S."/>
            <person name="Arlat M."/>
            <person name="Billault A."/>
            <person name="Brottier P."/>
            <person name="Camus J.-C."/>
            <person name="Cattolico L."/>
            <person name="Chandler M."/>
            <person name="Choisne N."/>
            <person name="Claudel-Renard C."/>
            <person name="Cunnac S."/>
            <person name="Demange N."/>
            <person name="Gaspin C."/>
            <person name="Lavie M."/>
            <person name="Moisan A."/>
            <person name="Robert C."/>
            <person name="Saurin W."/>
            <person name="Schiex T."/>
            <person name="Siguier P."/>
            <person name="Thebault P."/>
            <person name="Whalen M."/>
            <person name="Wincker P."/>
            <person name="Levy M."/>
            <person name="Weissenbach J."/>
            <person name="Boucher C.A."/>
        </authorList>
    </citation>
    <scope>NUCLEOTIDE SEQUENCE [LARGE SCALE GENOMIC DNA]</scope>
    <source>
        <strain>ATCC BAA-1114 / GMI1000</strain>
    </source>
</reference>
<protein>
    <recommendedName>
        <fullName evidence="1">Potassium-transporting ATPase ATP-binding subunit</fullName>
        <ecNumber evidence="1">7.2.2.6</ecNumber>
    </recommendedName>
    <alternativeName>
        <fullName evidence="1">ATP phosphohydrolase [potassium-transporting] B chain</fullName>
    </alternativeName>
    <alternativeName>
        <fullName evidence="1">Potassium-binding and translocating subunit B</fullName>
    </alternativeName>
    <alternativeName>
        <fullName evidence="1">Potassium-translocating ATPase B chain</fullName>
    </alternativeName>
</protein>
<organism>
    <name type="scientific">Ralstonia nicotianae (strain ATCC BAA-1114 / GMI1000)</name>
    <name type="common">Ralstonia solanacearum</name>
    <dbReference type="NCBI Taxonomy" id="267608"/>
    <lineage>
        <taxon>Bacteria</taxon>
        <taxon>Pseudomonadati</taxon>
        <taxon>Pseudomonadota</taxon>
        <taxon>Betaproteobacteria</taxon>
        <taxon>Burkholderiales</taxon>
        <taxon>Burkholderiaceae</taxon>
        <taxon>Ralstonia</taxon>
        <taxon>Ralstonia solanacearum species complex</taxon>
    </lineage>
</organism>
<proteinExistence type="inferred from homology"/>
<keyword id="KW-0067">ATP-binding</keyword>
<keyword id="KW-0997">Cell inner membrane</keyword>
<keyword id="KW-1003">Cell membrane</keyword>
<keyword id="KW-0406">Ion transport</keyword>
<keyword id="KW-0460">Magnesium</keyword>
<keyword id="KW-0472">Membrane</keyword>
<keyword id="KW-0479">Metal-binding</keyword>
<keyword id="KW-0547">Nucleotide-binding</keyword>
<keyword id="KW-0597">Phosphoprotein</keyword>
<keyword id="KW-0630">Potassium</keyword>
<keyword id="KW-0633">Potassium transport</keyword>
<keyword id="KW-1185">Reference proteome</keyword>
<keyword id="KW-1278">Translocase</keyword>
<keyword id="KW-0812">Transmembrane</keyword>
<keyword id="KW-1133">Transmembrane helix</keyword>
<keyword id="KW-0813">Transport</keyword>
<name>KDPB_RALN1</name>
<feature type="chain" id="PRO_0000046129" description="Potassium-transporting ATPase ATP-binding subunit">
    <location>
        <begin position="1"/>
        <end position="744"/>
    </location>
</feature>
<feature type="transmembrane region" description="Helical" evidence="1">
    <location>
        <begin position="80"/>
        <end position="100"/>
    </location>
</feature>
<feature type="transmembrane region" description="Helical" evidence="1">
    <location>
        <begin position="108"/>
        <end position="128"/>
    </location>
</feature>
<feature type="transmembrane region" description="Helical" evidence="1">
    <location>
        <begin position="265"/>
        <end position="285"/>
    </location>
</feature>
<feature type="transmembrane region" description="Helical" evidence="1">
    <location>
        <begin position="310"/>
        <end position="330"/>
    </location>
</feature>
<feature type="transmembrane region" description="Helical" evidence="1">
    <location>
        <begin position="650"/>
        <end position="670"/>
    </location>
</feature>
<feature type="transmembrane region" description="Helical" evidence="1">
    <location>
        <begin position="678"/>
        <end position="698"/>
    </location>
</feature>
<feature type="transmembrane region" description="Helical" evidence="1">
    <location>
        <begin position="724"/>
        <end position="744"/>
    </location>
</feature>
<feature type="active site" description="4-aspartylphosphate intermediate" evidence="1">
    <location>
        <position position="363"/>
    </location>
</feature>
<feature type="binding site" evidence="1">
    <location>
        <position position="400"/>
    </location>
    <ligand>
        <name>ATP</name>
        <dbReference type="ChEBI" id="CHEBI:30616"/>
    </ligand>
</feature>
<feature type="binding site" evidence="1">
    <location>
        <position position="404"/>
    </location>
    <ligand>
        <name>ATP</name>
        <dbReference type="ChEBI" id="CHEBI:30616"/>
    </ligand>
</feature>
<feature type="binding site" evidence="1">
    <location>
        <begin position="435"/>
        <end position="442"/>
    </location>
    <ligand>
        <name>ATP</name>
        <dbReference type="ChEBI" id="CHEBI:30616"/>
    </ligand>
</feature>
<feature type="binding site" evidence="1">
    <location>
        <position position="457"/>
    </location>
    <ligand>
        <name>ATP</name>
        <dbReference type="ChEBI" id="CHEBI:30616"/>
    </ligand>
</feature>
<feature type="binding site" evidence="1">
    <location>
        <position position="580"/>
    </location>
    <ligand>
        <name>Mg(2+)</name>
        <dbReference type="ChEBI" id="CHEBI:18420"/>
    </ligand>
</feature>
<feature type="binding site" evidence="1">
    <location>
        <position position="584"/>
    </location>
    <ligand>
        <name>Mg(2+)</name>
        <dbReference type="ChEBI" id="CHEBI:18420"/>
    </ligand>
</feature>
<accession>Q8XU11</accession>
<gene>
    <name evidence="1" type="primary">kdpB</name>
    <name type="ordered locus">RSc3383</name>
    <name type="ORF">RS02657</name>
</gene>
<sequence>MALRYPESDPVVRTVKHRLDSTDAAAHAAAPARTTTHPGAHPPLSAKDVRRLSMFAPALVRPAIVDSFRKLSPRAQAKNPVMFVVYIGSILTTLLWVMALRGQAEAPAGFILAVSVWLWFTVLFANVAEALAEGRSKQQAASLRGIKTTVQAKVLADPQRRDRVQPRAATALRRGDIVLIEAGDMVPGDGEVIEGVASVDESAITGESAPVIRESGGDFSSVTGGTRVLSDWIVARITANPGESFLDRMISMVEGAKRQKTPNELALTILLVSLTIILLLATVTLLPYSIFSVEVMKAAGVTSSPITITVLVALLVCLIPTTIGGLLSAIGVAGMSRMMQANVIATSGRAVEAAGDVDVLLLDKTGTITHGNRQASRFIPAPGVTVKALAEAAWLSSLADETPEGRSIVTLARQLGEAAVDEAALARSQPVFVPFSAQTRMSGINVALGDAAHQIRKGAADAIRTHVTVLAGRFPEAVLAAVEDVARKGGTPLVVSDNDRVMGVVELKDIVKAGIRERFAELRQMGIKTVMITGDNRLTAASIAAEAGVDDFIAEAAPETKLALIREQQAQGRLVAMTGDGTNDAPALAQADVAVAMNSGTQAAKEAGNMVDLDSSPTKLIQIVEIGKQMLMTRGSLTTFSIANDVAKYFAIIPAAFATTYPQLAALNVMRLATPASAVMSAVIFNALIIVFLIPLALKGVKYRPLGAAALLRRNLWIYGLGGLLLPFPGIKLIDMFLAAMGWV</sequence>
<evidence type="ECO:0000255" key="1">
    <source>
        <dbReference type="HAMAP-Rule" id="MF_00285"/>
    </source>
</evidence>